<sequence>MPVHMMMSGIIIAGGRSRRFGTDKRRLRLWGEQGPCLLERAVALLQPLCSEVLVVLNDAHAWPDLPARLVADEQPGSGALGGVISGLQAMQTPTALVIAADMPVIVPALLAALAQWPFVGDALIPSSYPHPGQLQPLLAVYRHSALAPLRRVFAAGERRLQVAVTALHWVDPGPELWQMYDPTARSLLNLNTPDDLKLVQAYLGTTNI</sequence>
<feature type="chain" id="PRO_1000132957" description="Probable molybdenum cofactor guanylyltransferase">
    <location>
        <begin position="1"/>
        <end position="208"/>
    </location>
</feature>
<feature type="binding site" evidence="1">
    <location>
        <begin position="12"/>
        <end position="14"/>
    </location>
    <ligand>
        <name>GTP</name>
        <dbReference type="ChEBI" id="CHEBI:37565"/>
    </ligand>
</feature>
<feature type="binding site" evidence="1">
    <location>
        <position position="24"/>
    </location>
    <ligand>
        <name>GTP</name>
        <dbReference type="ChEBI" id="CHEBI:37565"/>
    </ligand>
</feature>
<feature type="binding site" evidence="1">
    <location>
        <position position="72"/>
    </location>
    <ligand>
        <name>GTP</name>
        <dbReference type="ChEBI" id="CHEBI:37565"/>
    </ligand>
</feature>
<feature type="binding site" evidence="1">
    <location>
        <position position="101"/>
    </location>
    <ligand>
        <name>GTP</name>
        <dbReference type="ChEBI" id="CHEBI:37565"/>
    </ligand>
</feature>
<feature type="binding site" evidence="1">
    <location>
        <position position="101"/>
    </location>
    <ligand>
        <name>Mg(2+)</name>
        <dbReference type="ChEBI" id="CHEBI:18420"/>
    </ligand>
</feature>
<organism>
    <name type="scientific">Chloroflexus aggregans (strain MD-66 / DSM 9485)</name>
    <dbReference type="NCBI Taxonomy" id="326427"/>
    <lineage>
        <taxon>Bacteria</taxon>
        <taxon>Bacillati</taxon>
        <taxon>Chloroflexota</taxon>
        <taxon>Chloroflexia</taxon>
        <taxon>Chloroflexales</taxon>
        <taxon>Chloroflexineae</taxon>
        <taxon>Chloroflexaceae</taxon>
        <taxon>Chloroflexus</taxon>
    </lineage>
</organism>
<protein>
    <recommendedName>
        <fullName evidence="1">Probable molybdenum cofactor guanylyltransferase</fullName>
        <shortName evidence="1">MoCo guanylyltransferase</shortName>
        <ecNumber evidence="1">2.7.7.77</ecNumber>
    </recommendedName>
    <alternativeName>
        <fullName evidence="1">GTP:molybdopterin guanylyltransferase</fullName>
    </alternativeName>
    <alternativeName>
        <fullName evidence="1">Mo-MPT guanylyltransferase</fullName>
    </alternativeName>
    <alternativeName>
        <fullName evidence="1">Molybdopterin guanylyltransferase</fullName>
    </alternativeName>
    <alternativeName>
        <fullName evidence="1">Molybdopterin-guanine dinucleotide synthase</fullName>
        <shortName evidence="1">MGD synthase</shortName>
    </alternativeName>
</protein>
<reference key="1">
    <citation type="submission" date="2008-12" db="EMBL/GenBank/DDBJ databases">
        <title>Complete sequence of Chloroflexus aggregans DSM 9485.</title>
        <authorList>
            <consortium name="US DOE Joint Genome Institute"/>
            <person name="Lucas S."/>
            <person name="Copeland A."/>
            <person name="Lapidus A."/>
            <person name="Glavina del Rio T."/>
            <person name="Dalin E."/>
            <person name="Tice H."/>
            <person name="Pitluck S."/>
            <person name="Foster B."/>
            <person name="Larimer F."/>
            <person name="Land M."/>
            <person name="Hauser L."/>
            <person name="Kyrpides N."/>
            <person name="Mikhailova N."/>
            <person name="Bryant D.A."/>
            <person name="Richardson P."/>
        </authorList>
    </citation>
    <scope>NUCLEOTIDE SEQUENCE [LARGE SCALE GENOMIC DNA]</scope>
    <source>
        <strain>MD-66 / DSM 9485</strain>
    </source>
</reference>
<keyword id="KW-0963">Cytoplasm</keyword>
<keyword id="KW-0342">GTP-binding</keyword>
<keyword id="KW-0460">Magnesium</keyword>
<keyword id="KW-0479">Metal-binding</keyword>
<keyword id="KW-0501">Molybdenum cofactor biosynthesis</keyword>
<keyword id="KW-0547">Nucleotide-binding</keyword>
<keyword id="KW-0808">Transferase</keyword>
<dbReference type="EC" id="2.7.7.77" evidence="1"/>
<dbReference type="EMBL" id="CP001337">
    <property type="protein sequence ID" value="ACL24262.1"/>
    <property type="molecule type" value="Genomic_DNA"/>
</dbReference>
<dbReference type="SMR" id="B8G8K0"/>
<dbReference type="STRING" id="326427.Cagg_1355"/>
<dbReference type="KEGG" id="cag:Cagg_1355"/>
<dbReference type="eggNOG" id="COG0746">
    <property type="taxonomic scope" value="Bacteria"/>
</dbReference>
<dbReference type="HOGENOM" id="CLU_055597_3_2_0"/>
<dbReference type="OrthoDB" id="9788394at2"/>
<dbReference type="Proteomes" id="UP000002508">
    <property type="component" value="Chromosome"/>
</dbReference>
<dbReference type="GO" id="GO:0005737">
    <property type="term" value="C:cytoplasm"/>
    <property type="evidence" value="ECO:0007669"/>
    <property type="project" value="UniProtKB-SubCell"/>
</dbReference>
<dbReference type="GO" id="GO:0005525">
    <property type="term" value="F:GTP binding"/>
    <property type="evidence" value="ECO:0007669"/>
    <property type="project" value="UniProtKB-UniRule"/>
</dbReference>
<dbReference type="GO" id="GO:0046872">
    <property type="term" value="F:metal ion binding"/>
    <property type="evidence" value="ECO:0007669"/>
    <property type="project" value="UniProtKB-KW"/>
</dbReference>
<dbReference type="GO" id="GO:0061603">
    <property type="term" value="F:molybdenum cofactor guanylyltransferase activity"/>
    <property type="evidence" value="ECO:0007669"/>
    <property type="project" value="UniProtKB-EC"/>
</dbReference>
<dbReference type="GO" id="GO:0006777">
    <property type="term" value="P:Mo-molybdopterin cofactor biosynthetic process"/>
    <property type="evidence" value="ECO:0007669"/>
    <property type="project" value="UniProtKB-KW"/>
</dbReference>
<dbReference type="CDD" id="cd02503">
    <property type="entry name" value="MobA"/>
    <property type="match status" value="1"/>
</dbReference>
<dbReference type="Gene3D" id="3.90.550.10">
    <property type="entry name" value="Spore Coat Polysaccharide Biosynthesis Protein SpsA, Chain A"/>
    <property type="match status" value="1"/>
</dbReference>
<dbReference type="HAMAP" id="MF_00316">
    <property type="entry name" value="MobA"/>
    <property type="match status" value="1"/>
</dbReference>
<dbReference type="InterPro" id="IPR025877">
    <property type="entry name" value="MobA-like_NTP_Trfase"/>
</dbReference>
<dbReference type="InterPro" id="IPR013482">
    <property type="entry name" value="Molybde_CF_guanTrfase"/>
</dbReference>
<dbReference type="InterPro" id="IPR029044">
    <property type="entry name" value="Nucleotide-diphossugar_trans"/>
</dbReference>
<dbReference type="PANTHER" id="PTHR19136">
    <property type="entry name" value="MOLYBDENUM COFACTOR GUANYLYLTRANSFERASE"/>
    <property type="match status" value="1"/>
</dbReference>
<dbReference type="PANTHER" id="PTHR19136:SF81">
    <property type="entry name" value="MOLYBDENUM COFACTOR GUANYLYLTRANSFERASE"/>
    <property type="match status" value="1"/>
</dbReference>
<dbReference type="Pfam" id="PF12804">
    <property type="entry name" value="NTP_transf_3"/>
    <property type="match status" value="1"/>
</dbReference>
<dbReference type="SUPFAM" id="SSF53448">
    <property type="entry name" value="Nucleotide-diphospho-sugar transferases"/>
    <property type="match status" value="1"/>
</dbReference>
<evidence type="ECO:0000255" key="1">
    <source>
        <dbReference type="HAMAP-Rule" id="MF_00316"/>
    </source>
</evidence>
<proteinExistence type="inferred from homology"/>
<accession>B8G8K0</accession>
<name>MOBA_CHLAD</name>
<gene>
    <name evidence="1" type="primary">mobA</name>
    <name type="ordered locus">Cagg_1355</name>
</gene>
<comment type="function">
    <text evidence="1">Transfers a GMP moiety from GTP to Mo-molybdopterin (Mo-MPT) cofactor (Moco or molybdenum cofactor) to form Mo-molybdopterin guanine dinucleotide (Mo-MGD) cofactor.</text>
</comment>
<comment type="catalytic activity">
    <reaction evidence="1">
        <text>Mo-molybdopterin + GTP + H(+) = Mo-molybdopterin guanine dinucleotide + diphosphate</text>
        <dbReference type="Rhea" id="RHEA:34243"/>
        <dbReference type="ChEBI" id="CHEBI:15378"/>
        <dbReference type="ChEBI" id="CHEBI:33019"/>
        <dbReference type="ChEBI" id="CHEBI:37565"/>
        <dbReference type="ChEBI" id="CHEBI:71302"/>
        <dbReference type="ChEBI" id="CHEBI:71310"/>
        <dbReference type="EC" id="2.7.7.77"/>
    </reaction>
</comment>
<comment type="cofactor">
    <cofactor evidence="1">
        <name>Mg(2+)</name>
        <dbReference type="ChEBI" id="CHEBI:18420"/>
    </cofactor>
</comment>
<comment type="subcellular location">
    <subcellularLocation>
        <location evidence="1">Cytoplasm</location>
    </subcellularLocation>
</comment>
<comment type="domain">
    <text evidence="1">The N-terminal domain determines nucleotide recognition and specific binding, while the C-terminal domain determines the specific binding to the target protein.</text>
</comment>
<comment type="similarity">
    <text evidence="1">Belongs to the MobA family.</text>
</comment>